<protein>
    <recommendedName>
        <fullName evidence="1">Large ribosomal subunit protein bL21</fullName>
    </recommendedName>
    <alternativeName>
        <fullName evidence="2">50S ribosomal protein L21</fullName>
    </alternativeName>
</protein>
<sequence>MSYAIIEAGGQQLKVEPGRFYDINYLGVDPDSDYTIDKVLLINHEDDITVGQPYVEGATVEGTIVEHRRGRKIIVYKMRPKKKTRKKRGHRQELSRLMITSIKVNGSVIVDDSAVMTETSEEE</sequence>
<dbReference type="EMBL" id="CP001287">
    <property type="protein sequence ID" value="ACK67315.1"/>
    <property type="molecule type" value="Genomic_DNA"/>
</dbReference>
<dbReference type="RefSeq" id="WP_012596576.1">
    <property type="nucleotide sequence ID" value="NC_011726.1"/>
</dbReference>
<dbReference type="SMR" id="B7JZA4"/>
<dbReference type="STRING" id="41431.PCC8801_3346"/>
<dbReference type="KEGG" id="cyp:PCC8801_3346"/>
<dbReference type="eggNOG" id="COG0261">
    <property type="taxonomic scope" value="Bacteria"/>
</dbReference>
<dbReference type="HOGENOM" id="CLU_061463_1_2_3"/>
<dbReference type="OrthoDB" id="9813334at2"/>
<dbReference type="Proteomes" id="UP000008204">
    <property type="component" value="Chromosome"/>
</dbReference>
<dbReference type="GO" id="GO:0005737">
    <property type="term" value="C:cytoplasm"/>
    <property type="evidence" value="ECO:0007669"/>
    <property type="project" value="UniProtKB-ARBA"/>
</dbReference>
<dbReference type="GO" id="GO:1990904">
    <property type="term" value="C:ribonucleoprotein complex"/>
    <property type="evidence" value="ECO:0007669"/>
    <property type="project" value="UniProtKB-KW"/>
</dbReference>
<dbReference type="GO" id="GO:0005840">
    <property type="term" value="C:ribosome"/>
    <property type="evidence" value="ECO:0007669"/>
    <property type="project" value="UniProtKB-KW"/>
</dbReference>
<dbReference type="GO" id="GO:0019843">
    <property type="term" value="F:rRNA binding"/>
    <property type="evidence" value="ECO:0007669"/>
    <property type="project" value="UniProtKB-UniRule"/>
</dbReference>
<dbReference type="GO" id="GO:0003735">
    <property type="term" value="F:structural constituent of ribosome"/>
    <property type="evidence" value="ECO:0007669"/>
    <property type="project" value="InterPro"/>
</dbReference>
<dbReference type="GO" id="GO:0006412">
    <property type="term" value="P:translation"/>
    <property type="evidence" value="ECO:0007669"/>
    <property type="project" value="UniProtKB-UniRule"/>
</dbReference>
<dbReference type="HAMAP" id="MF_01363">
    <property type="entry name" value="Ribosomal_bL21"/>
    <property type="match status" value="1"/>
</dbReference>
<dbReference type="InterPro" id="IPR028909">
    <property type="entry name" value="bL21-like"/>
</dbReference>
<dbReference type="InterPro" id="IPR036164">
    <property type="entry name" value="bL21-like_sf"/>
</dbReference>
<dbReference type="InterPro" id="IPR001787">
    <property type="entry name" value="Ribosomal_bL21"/>
</dbReference>
<dbReference type="InterPro" id="IPR018258">
    <property type="entry name" value="Ribosomal_bL21_CS"/>
</dbReference>
<dbReference type="NCBIfam" id="TIGR00061">
    <property type="entry name" value="L21"/>
    <property type="match status" value="1"/>
</dbReference>
<dbReference type="PANTHER" id="PTHR21349">
    <property type="entry name" value="50S RIBOSOMAL PROTEIN L21"/>
    <property type="match status" value="1"/>
</dbReference>
<dbReference type="PANTHER" id="PTHR21349:SF0">
    <property type="entry name" value="LARGE RIBOSOMAL SUBUNIT PROTEIN BL21M"/>
    <property type="match status" value="1"/>
</dbReference>
<dbReference type="Pfam" id="PF00829">
    <property type="entry name" value="Ribosomal_L21p"/>
    <property type="match status" value="1"/>
</dbReference>
<dbReference type="SUPFAM" id="SSF141091">
    <property type="entry name" value="L21p-like"/>
    <property type="match status" value="1"/>
</dbReference>
<dbReference type="PROSITE" id="PS01169">
    <property type="entry name" value="RIBOSOMAL_L21"/>
    <property type="match status" value="1"/>
</dbReference>
<comment type="function">
    <text evidence="1">This protein binds to 23S rRNA in the presence of protein L20.</text>
</comment>
<comment type="subunit">
    <text evidence="1">Part of the 50S ribosomal subunit. Contacts protein L20.</text>
</comment>
<comment type="similarity">
    <text evidence="1">Belongs to the bacterial ribosomal protein bL21 family.</text>
</comment>
<organism>
    <name type="scientific">Rippkaea orientalis (strain PCC 8801 / RF-1)</name>
    <name type="common">Cyanothece sp. (strain PCC 8801)</name>
    <dbReference type="NCBI Taxonomy" id="41431"/>
    <lineage>
        <taxon>Bacteria</taxon>
        <taxon>Bacillati</taxon>
        <taxon>Cyanobacteriota</taxon>
        <taxon>Cyanophyceae</taxon>
        <taxon>Oscillatoriophycideae</taxon>
        <taxon>Chroococcales</taxon>
        <taxon>Aphanothecaceae</taxon>
        <taxon>Rippkaea</taxon>
        <taxon>Rippkaea orientalis</taxon>
    </lineage>
</organism>
<reference key="1">
    <citation type="journal article" date="2011" name="MBio">
        <title>Novel metabolic attributes of the genus Cyanothece, comprising a group of unicellular nitrogen-fixing Cyanobacteria.</title>
        <authorList>
            <person name="Bandyopadhyay A."/>
            <person name="Elvitigala T."/>
            <person name="Welsh E."/>
            <person name="Stockel J."/>
            <person name="Liberton M."/>
            <person name="Min H."/>
            <person name="Sherman L.A."/>
            <person name="Pakrasi H.B."/>
        </authorList>
    </citation>
    <scope>NUCLEOTIDE SEQUENCE [LARGE SCALE GENOMIC DNA]</scope>
    <source>
        <strain>PCC 8801 / RF-1</strain>
    </source>
</reference>
<proteinExistence type="inferred from homology"/>
<accession>B7JZA4</accession>
<feature type="chain" id="PRO_1000143780" description="Large ribosomal subunit protein bL21">
    <location>
        <begin position="1"/>
        <end position="123"/>
    </location>
</feature>
<gene>
    <name evidence="1" type="primary">rplU</name>
    <name evidence="1" type="synonym">rpl21</name>
    <name type="ordered locus">PCC8801_3346</name>
</gene>
<evidence type="ECO:0000255" key="1">
    <source>
        <dbReference type="HAMAP-Rule" id="MF_01363"/>
    </source>
</evidence>
<evidence type="ECO:0000305" key="2"/>
<keyword id="KW-1185">Reference proteome</keyword>
<keyword id="KW-0687">Ribonucleoprotein</keyword>
<keyword id="KW-0689">Ribosomal protein</keyword>
<keyword id="KW-0694">RNA-binding</keyword>
<keyword id="KW-0699">rRNA-binding</keyword>
<name>RL21_RIPO1</name>